<proteinExistence type="inferred from homology"/>
<protein>
    <recommendedName>
        <fullName evidence="1">ATP synthase epsilon chain</fullName>
    </recommendedName>
    <alternativeName>
        <fullName evidence="1">ATP synthase F1 sector epsilon subunit</fullName>
    </alternativeName>
    <alternativeName>
        <fullName evidence="1">F-ATPase epsilon subunit</fullName>
    </alternativeName>
</protein>
<gene>
    <name evidence="1" type="primary">atpC</name>
    <name type="ordered locus">RHECIAT_CH0004150</name>
</gene>
<evidence type="ECO:0000255" key="1">
    <source>
        <dbReference type="HAMAP-Rule" id="MF_00530"/>
    </source>
</evidence>
<name>ATPE_RHIE6</name>
<comment type="function">
    <text evidence="1">Produces ATP from ADP in the presence of a proton gradient across the membrane.</text>
</comment>
<comment type="subunit">
    <text evidence="1">F-type ATPases have 2 components, CF(1) - the catalytic core - and CF(0) - the membrane proton channel. CF(1) has five subunits: alpha(3), beta(3), gamma(1), delta(1), epsilon(1). CF(0) has three main subunits: a, b and c.</text>
</comment>
<comment type="subcellular location">
    <subcellularLocation>
        <location evidence="1">Cell inner membrane</location>
        <topology evidence="1">Peripheral membrane protein</topology>
    </subcellularLocation>
</comment>
<comment type="similarity">
    <text evidence="1">Belongs to the ATPase epsilon chain family.</text>
</comment>
<dbReference type="EMBL" id="CP001074">
    <property type="protein sequence ID" value="ACE93079.1"/>
    <property type="molecule type" value="Genomic_DNA"/>
</dbReference>
<dbReference type="SMR" id="B3PQ67"/>
<dbReference type="KEGG" id="rec:RHECIAT_CH0004150"/>
<dbReference type="eggNOG" id="COG0355">
    <property type="taxonomic scope" value="Bacteria"/>
</dbReference>
<dbReference type="HOGENOM" id="CLU_084338_2_1_5"/>
<dbReference type="Proteomes" id="UP000008817">
    <property type="component" value="Chromosome"/>
</dbReference>
<dbReference type="GO" id="GO:0005886">
    <property type="term" value="C:plasma membrane"/>
    <property type="evidence" value="ECO:0007669"/>
    <property type="project" value="UniProtKB-SubCell"/>
</dbReference>
<dbReference type="GO" id="GO:0045259">
    <property type="term" value="C:proton-transporting ATP synthase complex"/>
    <property type="evidence" value="ECO:0007669"/>
    <property type="project" value="UniProtKB-KW"/>
</dbReference>
<dbReference type="GO" id="GO:0005524">
    <property type="term" value="F:ATP binding"/>
    <property type="evidence" value="ECO:0007669"/>
    <property type="project" value="UniProtKB-UniRule"/>
</dbReference>
<dbReference type="GO" id="GO:0046933">
    <property type="term" value="F:proton-transporting ATP synthase activity, rotational mechanism"/>
    <property type="evidence" value="ECO:0007669"/>
    <property type="project" value="UniProtKB-UniRule"/>
</dbReference>
<dbReference type="CDD" id="cd12152">
    <property type="entry name" value="F1-ATPase_delta"/>
    <property type="match status" value="1"/>
</dbReference>
<dbReference type="Gene3D" id="2.60.15.10">
    <property type="entry name" value="F0F1 ATP synthase delta/epsilon subunit, N-terminal"/>
    <property type="match status" value="1"/>
</dbReference>
<dbReference type="HAMAP" id="MF_00530">
    <property type="entry name" value="ATP_synth_epsil_bac"/>
    <property type="match status" value="1"/>
</dbReference>
<dbReference type="InterPro" id="IPR001469">
    <property type="entry name" value="ATP_synth_F1_dsu/esu"/>
</dbReference>
<dbReference type="InterPro" id="IPR020546">
    <property type="entry name" value="ATP_synth_F1_dsu/esu_N"/>
</dbReference>
<dbReference type="InterPro" id="IPR036771">
    <property type="entry name" value="ATPsynth_dsu/esu_N"/>
</dbReference>
<dbReference type="NCBIfam" id="TIGR01216">
    <property type="entry name" value="ATP_synt_epsi"/>
    <property type="match status" value="1"/>
</dbReference>
<dbReference type="NCBIfam" id="NF001851">
    <property type="entry name" value="PRK00571.2-4"/>
    <property type="match status" value="1"/>
</dbReference>
<dbReference type="PANTHER" id="PTHR13822">
    <property type="entry name" value="ATP SYNTHASE DELTA/EPSILON CHAIN"/>
    <property type="match status" value="1"/>
</dbReference>
<dbReference type="PANTHER" id="PTHR13822:SF10">
    <property type="entry name" value="ATP SYNTHASE EPSILON CHAIN, CHLOROPLASTIC"/>
    <property type="match status" value="1"/>
</dbReference>
<dbReference type="Pfam" id="PF02823">
    <property type="entry name" value="ATP-synt_DE_N"/>
    <property type="match status" value="1"/>
</dbReference>
<dbReference type="SUPFAM" id="SSF51344">
    <property type="entry name" value="Epsilon subunit of F1F0-ATP synthase N-terminal domain"/>
    <property type="match status" value="1"/>
</dbReference>
<organism>
    <name type="scientific">Rhizobium etli (strain CIAT 652)</name>
    <dbReference type="NCBI Taxonomy" id="491916"/>
    <lineage>
        <taxon>Bacteria</taxon>
        <taxon>Pseudomonadati</taxon>
        <taxon>Pseudomonadota</taxon>
        <taxon>Alphaproteobacteria</taxon>
        <taxon>Hyphomicrobiales</taxon>
        <taxon>Rhizobiaceae</taxon>
        <taxon>Rhizobium/Agrobacterium group</taxon>
        <taxon>Rhizobium</taxon>
    </lineage>
</organism>
<sequence>MADNFNFELVSPERLLLSEMVTEVVIPATEGEMTVMAHHAPTMTTIKPGIVSVRSGSGKKQDYVVFGGFADILPTGCTLLAESAVPVEELNKDELTRRIEAAKKELEDAVHHEHKSKLEHFILELTHLRGVVQQD</sequence>
<feature type="chain" id="PRO_1000127881" description="ATP synthase epsilon chain">
    <location>
        <begin position="1"/>
        <end position="135"/>
    </location>
</feature>
<accession>B3PQ67</accession>
<keyword id="KW-0066">ATP synthesis</keyword>
<keyword id="KW-0997">Cell inner membrane</keyword>
<keyword id="KW-1003">Cell membrane</keyword>
<keyword id="KW-0139">CF(1)</keyword>
<keyword id="KW-0375">Hydrogen ion transport</keyword>
<keyword id="KW-0406">Ion transport</keyword>
<keyword id="KW-0472">Membrane</keyword>
<keyword id="KW-0813">Transport</keyword>
<reference key="1">
    <citation type="journal article" date="2010" name="Appl. Environ. Microbiol.">
        <title>Conserved symbiotic plasmid DNA sequences in the multireplicon pangenomic structure of Rhizobium etli.</title>
        <authorList>
            <person name="Gonzalez V."/>
            <person name="Acosta J.L."/>
            <person name="Santamaria R.I."/>
            <person name="Bustos P."/>
            <person name="Fernandez J.L."/>
            <person name="Hernandez Gonzalez I.L."/>
            <person name="Diaz R."/>
            <person name="Flores M."/>
            <person name="Palacios R."/>
            <person name="Mora J."/>
            <person name="Davila G."/>
        </authorList>
    </citation>
    <scope>NUCLEOTIDE SEQUENCE [LARGE SCALE GENOMIC DNA]</scope>
    <source>
        <strain>CIAT 652</strain>
    </source>
</reference>